<protein>
    <recommendedName>
        <fullName>Pyruvate dehydrogenase E1 component subunit beta</fullName>
        <ecNumber>1.2.4.1</ecNumber>
    </recommendedName>
</protein>
<sequence length="325" mass="35293">MAQMTMVQAINDALKSELKRDEDVLVFGEDVGVNGGVFRVTEGLQKEFGEDRVFDTPLAESGIGGLALGLAVTGFRPVMEIQFLGFVYEVFDEVAGQIARTRFRSGGTKPAPVTIRTPFGGGVHTPELHADNLEGILAQSPGLKVVIPSGPYDAKGLLISSIQSNDPVVYLEHMKLYRSFREEVPEEEYKIDIGKANVKKEGNDITLISYGAMVQESLKAAEELEKDGYSVEVIDLRTVQPIDIDTLVASVEKTGRAVVVQEAQRQAGVGAQVAAELAERAILSLEAPIARVAASDTIYPFTQAENVWLPNKKDIIEQAKATLEF</sequence>
<dbReference type="EC" id="1.2.4.1"/>
<dbReference type="EMBL" id="AE015929">
    <property type="protein sequence ID" value="AAO04389.1"/>
    <property type="molecule type" value="Genomic_DNA"/>
</dbReference>
<dbReference type="RefSeq" id="NP_764347.1">
    <property type="nucleotide sequence ID" value="NC_004461.1"/>
</dbReference>
<dbReference type="RefSeq" id="WP_001831654.1">
    <property type="nucleotide sequence ID" value="NZ_WBME01000031.1"/>
</dbReference>
<dbReference type="SMR" id="Q8CPN2"/>
<dbReference type="KEGG" id="sep:SE_0792"/>
<dbReference type="PATRIC" id="fig|176280.10.peg.765"/>
<dbReference type="eggNOG" id="COG0022">
    <property type="taxonomic scope" value="Bacteria"/>
</dbReference>
<dbReference type="HOGENOM" id="CLU_012907_1_0_9"/>
<dbReference type="OrthoDB" id="9771835at2"/>
<dbReference type="Proteomes" id="UP000001411">
    <property type="component" value="Chromosome"/>
</dbReference>
<dbReference type="GO" id="GO:0004739">
    <property type="term" value="F:pyruvate dehydrogenase (acetyl-transferring) activity"/>
    <property type="evidence" value="ECO:0007669"/>
    <property type="project" value="UniProtKB-EC"/>
</dbReference>
<dbReference type="CDD" id="cd07036">
    <property type="entry name" value="TPP_PYR_E1-PDHc-beta_like"/>
    <property type="match status" value="1"/>
</dbReference>
<dbReference type="FunFam" id="3.40.50.920:FF:000001">
    <property type="entry name" value="Pyruvate dehydrogenase E1 beta subunit"/>
    <property type="match status" value="1"/>
</dbReference>
<dbReference type="FunFam" id="3.40.50.970:FF:000001">
    <property type="entry name" value="Pyruvate dehydrogenase E1 beta subunit"/>
    <property type="match status" value="1"/>
</dbReference>
<dbReference type="Gene3D" id="3.40.50.920">
    <property type="match status" value="1"/>
</dbReference>
<dbReference type="Gene3D" id="3.40.50.970">
    <property type="match status" value="1"/>
</dbReference>
<dbReference type="InterPro" id="IPR029061">
    <property type="entry name" value="THDP-binding"/>
</dbReference>
<dbReference type="InterPro" id="IPR009014">
    <property type="entry name" value="Transketo_C/PFOR_II"/>
</dbReference>
<dbReference type="InterPro" id="IPR005475">
    <property type="entry name" value="Transketolase-like_Pyr-bd"/>
</dbReference>
<dbReference type="InterPro" id="IPR033248">
    <property type="entry name" value="Transketolase_C"/>
</dbReference>
<dbReference type="PANTHER" id="PTHR43257">
    <property type="entry name" value="PYRUVATE DEHYDROGENASE E1 COMPONENT BETA SUBUNIT"/>
    <property type="match status" value="1"/>
</dbReference>
<dbReference type="PANTHER" id="PTHR43257:SF2">
    <property type="entry name" value="PYRUVATE DEHYDROGENASE E1 COMPONENT SUBUNIT BETA"/>
    <property type="match status" value="1"/>
</dbReference>
<dbReference type="Pfam" id="PF02779">
    <property type="entry name" value="Transket_pyr"/>
    <property type="match status" value="1"/>
</dbReference>
<dbReference type="Pfam" id="PF02780">
    <property type="entry name" value="Transketolase_C"/>
    <property type="match status" value="1"/>
</dbReference>
<dbReference type="SMART" id="SM00861">
    <property type="entry name" value="Transket_pyr"/>
    <property type="match status" value="1"/>
</dbReference>
<dbReference type="SUPFAM" id="SSF52518">
    <property type="entry name" value="Thiamin diphosphate-binding fold (THDP-binding)"/>
    <property type="match status" value="1"/>
</dbReference>
<dbReference type="SUPFAM" id="SSF52922">
    <property type="entry name" value="TK C-terminal domain-like"/>
    <property type="match status" value="1"/>
</dbReference>
<reference key="1">
    <citation type="journal article" date="2003" name="Mol. Microbiol.">
        <title>Genome-based analysis of virulence genes in a non-biofilm-forming Staphylococcus epidermidis strain (ATCC 12228).</title>
        <authorList>
            <person name="Zhang Y.-Q."/>
            <person name="Ren S.-X."/>
            <person name="Li H.-L."/>
            <person name="Wang Y.-X."/>
            <person name="Fu G."/>
            <person name="Yang J."/>
            <person name="Qin Z.-Q."/>
            <person name="Miao Y.-G."/>
            <person name="Wang W.-Y."/>
            <person name="Chen R.-S."/>
            <person name="Shen Y."/>
            <person name="Chen Z."/>
            <person name="Yuan Z.-H."/>
            <person name="Zhao G.-P."/>
            <person name="Qu D."/>
            <person name="Danchin A."/>
            <person name="Wen Y.-M."/>
        </authorList>
    </citation>
    <scope>NUCLEOTIDE SEQUENCE [LARGE SCALE GENOMIC DNA]</scope>
    <source>
        <strain>ATCC 12228 / FDA PCI 1200</strain>
    </source>
</reference>
<accession>Q8CPN2</accession>
<keyword id="KW-0560">Oxidoreductase</keyword>
<keyword id="KW-0670">Pyruvate</keyword>
<keyword id="KW-0786">Thiamine pyrophosphate</keyword>
<evidence type="ECO:0000250" key="1"/>
<name>ODPB_STAES</name>
<proteinExistence type="inferred from homology"/>
<gene>
    <name type="primary">pdhB</name>
    <name type="ordered locus">SE_0792</name>
</gene>
<feature type="chain" id="PRO_0000162235" description="Pyruvate dehydrogenase E1 component subunit beta">
    <location>
        <begin position="1"/>
        <end position="325"/>
    </location>
</feature>
<feature type="binding site" evidence="1">
    <location>
        <position position="60"/>
    </location>
    <ligand>
        <name>thiamine diphosphate</name>
        <dbReference type="ChEBI" id="CHEBI:58937"/>
    </ligand>
</feature>
<comment type="function">
    <text evidence="1">The pyruvate dehydrogenase complex catalyzes the overall conversion of pyruvate to acetyl-CoA and CO(2). It contains multiple copies of three enzymatic components: pyruvate dehydrogenase (E1), dihydrolipoamide acetyltransferase (E2) and lipoamide dehydrogenase (E3) (By similarity).</text>
</comment>
<comment type="catalytic activity">
    <reaction>
        <text>N(6)-[(R)-lipoyl]-L-lysyl-[protein] + pyruvate + H(+) = N(6)-[(R)-S(8)-acetyldihydrolipoyl]-L-lysyl-[protein] + CO2</text>
        <dbReference type="Rhea" id="RHEA:19189"/>
        <dbReference type="Rhea" id="RHEA-COMP:10474"/>
        <dbReference type="Rhea" id="RHEA-COMP:10478"/>
        <dbReference type="ChEBI" id="CHEBI:15361"/>
        <dbReference type="ChEBI" id="CHEBI:15378"/>
        <dbReference type="ChEBI" id="CHEBI:16526"/>
        <dbReference type="ChEBI" id="CHEBI:83099"/>
        <dbReference type="ChEBI" id="CHEBI:83111"/>
        <dbReference type="EC" id="1.2.4.1"/>
    </reaction>
</comment>
<comment type="cofactor">
    <cofactor evidence="1">
        <name>thiamine diphosphate</name>
        <dbReference type="ChEBI" id="CHEBI:58937"/>
    </cofactor>
</comment>
<comment type="subunit">
    <text>Heterodimer of an alpha and a beta chain.</text>
</comment>
<organism>
    <name type="scientific">Staphylococcus epidermidis (strain ATCC 12228 / FDA PCI 1200)</name>
    <dbReference type="NCBI Taxonomy" id="176280"/>
    <lineage>
        <taxon>Bacteria</taxon>
        <taxon>Bacillati</taxon>
        <taxon>Bacillota</taxon>
        <taxon>Bacilli</taxon>
        <taxon>Bacillales</taxon>
        <taxon>Staphylococcaceae</taxon>
        <taxon>Staphylococcus</taxon>
    </lineage>
</organism>